<comment type="subcellular location">
    <subcellularLocation>
        <location evidence="1">Cell membrane</location>
        <topology evidence="1">Lipid-anchor</topology>
    </subcellularLocation>
</comment>
<accession>P0AB27</accession>
<accession>P09995</accession>
<sequence length="186" mass="20500">MNKFLFAAALIVSGLLVGCNQLTQYTITEQEINQSLAKHNNFSKDIGLPGVADAHIVLTNLTSQIGREEPNKVTLTGDANLDMNSLFGSQKATMKLKLKALPVFDKEKGAIFLKEMEVVDATVQPEKMQTVMQTLLPYLNQALRNYFNQQPAYVLREDGSQGEAMAKKLAKGIEVKPGEIVIPFTD</sequence>
<gene>
    <name type="primary">yceB</name>
    <name type="ordered locus">SF1069</name>
    <name type="ordered locus">S1147</name>
</gene>
<evidence type="ECO:0000255" key="1">
    <source>
        <dbReference type="PROSITE-ProRule" id="PRU00303"/>
    </source>
</evidence>
<dbReference type="EMBL" id="AE005674">
    <property type="protein sequence ID" value="AAN42691.2"/>
    <property type="molecule type" value="Genomic_DNA"/>
</dbReference>
<dbReference type="EMBL" id="AE014073">
    <property type="protein sequence ID" value="AAP16578.1"/>
    <property type="molecule type" value="Genomic_DNA"/>
</dbReference>
<dbReference type="RefSeq" id="NP_706984.2">
    <property type="nucleotide sequence ID" value="NC_004337.2"/>
</dbReference>
<dbReference type="RefSeq" id="WP_001295443.1">
    <property type="nucleotide sequence ID" value="NZ_WPGW01000001.1"/>
</dbReference>
<dbReference type="SMR" id="P0AB27"/>
<dbReference type="STRING" id="198214.SF1069"/>
<dbReference type="PaxDb" id="198214-SF1069"/>
<dbReference type="GeneID" id="1024009"/>
<dbReference type="KEGG" id="sfl:SF1069"/>
<dbReference type="KEGG" id="sfx:S1147"/>
<dbReference type="PATRIC" id="fig|198214.7.peg.1252"/>
<dbReference type="HOGENOM" id="CLU_105009_0_0_6"/>
<dbReference type="Proteomes" id="UP000001006">
    <property type="component" value="Chromosome"/>
</dbReference>
<dbReference type="Proteomes" id="UP000002673">
    <property type="component" value="Chromosome"/>
</dbReference>
<dbReference type="GO" id="GO:0005886">
    <property type="term" value="C:plasma membrane"/>
    <property type="evidence" value="ECO:0007669"/>
    <property type="project" value="UniProtKB-SubCell"/>
</dbReference>
<dbReference type="Gene3D" id="3.15.10.40">
    <property type="entry name" value="Uncharacterised protein PF07273, DUF1439"/>
    <property type="match status" value="1"/>
</dbReference>
<dbReference type="InterPro" id="IPR010835">
    <property type="entry name" value="DUF1439"/>
</dbReference>
<dbReference type="NCBIfam" id="NF007894">
    <property type="entry name" value="PRK10598.1"/>
    <property type="match status" value="1"/>
</dbReference>
<dbReference type="Pfam" id="PF07273">
    <property type="entry name" value="DUF1439"/>
    <property type="match status" value="1"/>
</dbReference>
<dbReference type="PROSITE" id="PS51257">
    <property type="entry name" value="PROKAR_LIPOPROTEIN"/>
    <property type="match status" value="1"/>
</dbReference>
<proteinExistence type="inferred from homology"/>
<keyword id="KW-1003">Cell membrane</keyword>
<keyword id="KW-0449">Lipoprotein</keyword>
<keyword id="KW-0472">Membrane</keyword>
<keyword id="KW-0564">Palmitate</keyword>
<keyword id="KW-1185">Reference proteome</keyword>
<keyword id="KW-0732">Signal</keyword>
<feature type="signal peptide" evidence="1">
    <location>
        <begin position="1"/>
        <end position="18"/>
    </location>
</feature>
<feature type="chain" id="PRO_0000042569" description="Uncharacterized lipoprotein YceB">
    <location>
        <begin position="19"/>
        <end position="186"/>
    </location>
</feature>
<feature type="lipid moiety-binding region" description="N-palmitoyl cysteine" evidence="1">
    <location>
        <position position="19"/>
    </location>
</feature>
<feature type="lipid moiety-binding region" description="S-diacylglycerol cysteine" evidence="1">
    <location>
        <position position="19"/>
    </location>
</feature>
<protein>
    <recommendedName>
        <fullName>Uncharacterized lipoprotein YceB</fullName>
    </recommendedName>
</protein>
<reference key="1">
    <citation type="journal article" date="2002" name="Nucleic Acids Res.">
        <title>Genome sequence of Shigella flexneri 2a: insights into pathogenicity through comparison with genomes of Escherichia coli K12 and O157.</title>
        <authorList>
            <person name="Jin Q."/>
            <person name="Yuan Z."/>
            <person name="Xu J."/>
            <person name="Wang Y."/>
            <person name="Shen Y."/>
            <person name="Lu W."/>
            <person name="Wang J."/>
            <person name="Liu H."/>
            <person name="Yang J."/>
            <person name="Yang F."/>
            <person name="Zhang X."/>
            <person name="Zhang J."/>
            <person name="Yang G."/>
            <person name="Wu H."/>
            <person name="Qu D."/>
            <person name="Dong J."/>
            <person name="Sun L."/>
            <person name="Xue Y."/>
            <person name="Zhao A."/>
            <person name="Gao Y."/>
            <person name="Zhu J."/>
            <person name="Kan B."/>
            <person name="Ding K."/>
            <person name="Chen S."/>
            <person name="Cheng H."/>
            <person name="Yao Z."/>
            <person name="He B."/>
            <person name="Chen R."/>
            <person name="Ma D."/>
            <person name="Qiang B."/>
            <person name="Wen Y."/>
            <person name="Hou Y."/>
            <person name="Yu J."/>
        </authorList>
    </citation>
    <scope>NUCLEOTIDE SEQUENCE [LARGE SCALE GENOMIC DNA]</scope>
    <source>
        <strain>301 / Serotype 2a</strain>
    </source>
</reference>
<reference key="2">
    <citation type="journal article" date="2003" name="Infect. Immun.">
        <title>Complete genome sequence and comparative genomics of Shigella flexneri serotype 2a strain 2457T.</title>
        <authorList>
            <person name="Wei J."/>
            <person name="Goldberg M.B."/>
            <person name="Burland V."/>
            <person name="Venkatesan M.M."/>
            <person name="Deng W."/>
            <person name="Fournier G."/>
            <person name="Mayhew G.F."/>
            <person name="Plunkett G. III"/>
            <person name="Rose D.J."/>
            <person name="Darling A."/>
            <person name="Mau B."/>
            <person name="Perna N.T."/>
            <person name="Payne S.M."/>
            <person name="Runyen-Janecky L.J."/>
            <person name="Zhou S."/>
            <person name="Schwartz D.C."/>
            <person name="Blattner F.R."/>
        </authorList>
    </citation>
    <scope>NUCLEOTIDE SEQUENCE [LARGE SCALE GENOMIC DNA]</scope>
    <source>
        <strain>ATCC 700930 / 2457T / Serotype 2a</strain>
    </source>
</reference>
<organism>
    <name type="scientific">Shigella flexneri</name>
    <dbReference type="NCBI Taxonomy" id="623"/>
    <lineage>
        <taxon>Bacteria</taxon>
        <taxon>Pseudomonadati</taxon>
        <taxon>Pseudomonadota</taxon>
        <taxon>Gammaproteobacteria</taxon>
        <taxon>Enterobacterales</taxon>
        <taxon>Enterobacteriaceae</taxon>
        <taxon>Shigella</taxon>
    </lineage>
</organism>
<name>YCEB_SHIFL</name>